<protein>
    <recommendedName>
        <fullName>Uncharacterized mitochondrial protein AtMg01040</fullName>
    </recommendedName>
    <alternativeName>
        <fullName>ORF107f</fullName>
    </alternativeName>
</protein>
<evidence type="ECO:0000256" key="1">
    <source>
        <dbReference type="SAM" id="MobiDB-lite"/>
    </source>
</evidence>
<evidence type="ECO:0000305" key="2"/>
<name>M1040_ARATH</name>
<comment type="subcellular location">
    <subcellularLocation>
        <location evidence="2">Mitochondrion</location>
    </subcellularLocation>
</comment>
<comment type="miscellaneous">
    <text>A stretch of 270 kb of the mitochondrial genome is duplicated within the centromere of chromosome 2 resulting in the duplication of the gene. The expression of the duplicated gene is not demonstrated.</text>
</comment>
<comment type="sequence caution" evidence="2">
    <conflict type="frameshift">
        <sequence resource="EMBL" id="AC007143"/>
    </conflict>
</comment>
<comment type="sequence caution" evidence="2">
    <conflict type="frameshift">
        <sequence resource="EMBL" id="AC007730"/>
    </conflict>
</comment>
<reference key="1">
    <citation type="journal article" date="1997" name="Nat. Genet.">
        <title>The mitochondrial genome of Arabidopsis thaliana contains 57 genes in 366,924 nucleotides.</title>
        <authorList>
            <person name="Unseld M."/>
            <person name="Marienfeld J.R."/>
            <person name="Brandt P."/>
            <person name="Brennicke A."/>
        </authorList>
    </citation>
    <scope>NUCLEOTIDE SEQUENCE [LARGE SCALE GENOMIC DNA]</scope>
    <source>
        <strain>cv. C24</strain>
    </source>
</reference>
<reference key="2">
    <citation type="journal article" date="2018" name="Plant Cell">
        <title>Correction of persistent errors in Arabidopsis reference mitochondrial genomes.</title>
        <authorList>
            <person name="Sloan D.B."/>
            <person name="Wu Z."/>
            <person name="Sharbrough J."/>
        </authorList>
    </citation>
    <scope>NUCLEOTIDE SEQUENCE [LARGE SCALE GENOMIC DNA]</scope>
    <source>
        <strain>cv. Columbia</strain>
    </source>
</reference>
<reference key="3">
    <citation type="journal article" date="1999" name="Nature">
        <title>Sequence and analysis of chromosome 2 of the plant Arabidopsis thaliana.</title>
        <authorList>
            <person name="Lin X."/>
            <person name="Kaul S."/>
            <person name="Rounsley S.D."/>
            <person name="Shea T.P."/>
            <person name="Benito M.-I."/>
            <person name="Town C.D."/>
            <person name="Fujii C.Y."/>
            <person name="Mason T.M."/>
            <person name="Bowman C.L."/>
            <person name="Barnstead M.E."/>
            <person name="Feldblyum T.V."/>
            <person name="Buell C.R."/>
            <person name="Ketchum K.A."/>
            <person name="Lee J.J."/>
            <person name="Ronning C.M."/>
            <person name="Koo H.L."/>
            <person name="Moffat K.S."/>
            <person name="Cronin L.A."/>
            <person name="Shen M."/>
            <person name="Pai G."/>
            <person name="Van Aken S."/>
            <person name="Umayam L."/>
            <person name="Tallon L.J."/>
            <person name="Gill J.E."/>
            <person name="Adams M.D."/>
            <person name="Carrera A.J."/>
            <person name="Creasy T.H."/>
            <person name="Goodman H.M."/>
            <person name="Somerville C.R."/>
            <person name="Copenhaver G.P."/>
            <person name="Preuss D."/>
            <person name="Nierman W.C."/>
            <person name="White O."/>
            <person name="Eisen J.A."/>
            <person name="Salzberg S.L."/>
            <person name="Fraser C.M."/>
            <person name="Venter J.C."/>
        </authorList>
    </citation>
    <scope>NUCLEOTIDE SEQUENCE [LARGE SCALE GENOMIC DNA]</scope>
    <source>
        <strain>cv. Columbia</strain>
    </source>
</reference>
<geneLocation type="mitochondrion"/>
<sequence length="107" mass="12130">MTERNASGRMNTKGRSIKETKKAMNEEVGPFTLFLVTLGADLINALQREGRLGLSHLGMAEHKRFENQVKIRKGREKTERKAVAPVRAREIKNKDSCFPHTHIGCEK</sequence>
<proteinExistence type="predicted"/>
<dbReference type="EMBL" id="Y08501">
    <property type="protein sequence ID" value="CAA69790.1"/>
    <property type="molecule type" value="Genomic_DNA"/>
</dbReference>
<dbReference type="EMBL" id="BK010421">
    <property type="status" value="NOT_ANNOTATED_CDS"/>
    <property type="molecule type" value="Genomic_DNA"/>
</dbReference>
<dbReference type="EMBL" id="AC007143">
    <property type="status" value="NOT_ANNOTATED_CDS"/>
    <property type="molecule type" value="Genomic_DNA"/>
</dbReference>
<dbReference type="EMBL" id="AC007730">
    <property type="status" value="NOT_ANNOTATED_CDS"/>
    <property type="molecule type" value="Genomic_DNA"/>
</dbReference>
<dbReference type="RefSeq" id="NP_085558.1">
    <property type="nucleotide sequence ID" value="NC_001284.2"/>
</dbReference>
<dbReference type="SMR" id="P92538"/>
<dbReference type="STRING" id="3702.P92538"/>
<dbReference type="PaxDb" id="3702-ATMG01040.1"/>
<dbReference type="EnsemblPlants" id="ATMG01040.1">
    <property type="protein sequence ID" value="ATMG01040.1"/>
    <property type="gene ID" value="ATMG01040"/>
</dbReference>
<dbReference type="Gramene" id="ATMG01040.1">
    <property type="protein sequence ID" value="ATMG01040.1"/>
    <property type="gene ID" value="ATMG01040"/>
</dbReference>
<dbReference type="Araport" id="ATMG01040"/>
<dbReference type="TAIR" id="ATMG01040">
    <property type="gene designation" value="ORF107F"/>
</dbReference>
<dbReference type="HOGENOM" id="CLU_2213571_0_0_1"/>
<dbReference type="InParanoid" id="P92538"/>
<dbReference type="PRO" id="PR:P92538"/>
<dbReference type="Proteomes" id="UP000006548">
    <property type="component" value="Mitochondrion MT"/>
</dbReference>
<dbReference type="GO" id="GO:0005739">
    <property type="term" value="C:mitochondrion"/>
    <property type="evidence" value="ECO:0007669"/>
    <property type="project" value="UniProtKB-SubCell"/>
</dbReference>
<accession>P92538</accession>
<accession>Q1ZXX6</accession>
<organism>
    <name type="scientific">Arabidopsis thaliana</name>
    <name type="common">Mouse-ear cress</name>
    <dbReference type="NCBI Taxonomy" id="3702"/>
    <lineage>
        <taxon>Eukaryota</taxon>
        <taxon>Viridiplantae</taxon>
        <taxon>Streptophyta</taxon>
        <taxon>Embryophyta</taxon>
        <taxon>Tracheophyta</taxon>
        <taxon>Spermatophyta</taxon>
        <taxon>Magnoliopsida</taxon>
        <taxon>eudicotyledons</taxon>
        <taxon>Gunneridae</taxon>
        <taxon>Pentapetalae</taxon>
        <taxon>rosids</taxon>
        <taxon>malvids</taxon>
        <taxon>Brassicales</taxon>
        <taxon>Brassicaceae</taxon>
        <taxon>Camelineae</taxon>
        <taxon>Arabidopsis</taxon>
    </lineage>
</organism>
<keyword id="KW-0496">Mitochondrion</keyword>
<keyword id="KW-1185">Reference proteome</keyword>
<feature type="chain" id="PRO_0000196808" description="Uncharacterized mitochondrial protein AtMg01040">
    <location>
        <begin position="1"/>
        <end position="107"/>
    </location>
</feature>
<feature type="region of interest" description="Disordered" evidence="1">
    <location>
        <begin position="1"/>
        <end position="20"/>
    </location>
</feature>
<feature type="compositionally biased region" description="Polar residues" evidence="1">
    <location>
        <begin position="1"/>
        <end position="14"/>
    </location>
</feature>
<gene>
    <name type="ordered locus">AtMg01040</name>
</gene>